<keyword id="KW-0066">ATP synthesis</keyword>
<keyword id="KW-0139">CF(1)</keyword>
<keyword id="KW-0150">Chloroplast</keyword>
<keyword id="KW-0375">Hydrogen ion transport</keyword>
<keyword id="KW-0406">Ion transport</keyword>
<keyword id="KW-0472">Membrane</keyword>
<keyword id="KW-0934">Plastid</keyword>
<keyword id="KW-1185">Reference proteome</keyword>
<keyword id="KW-0793">Thylakoid</keyword>
<keyword id="KW-0813">Transport</keyword>
<organism>
    <name type="scientific">Oryza nivara</name>
    <name type="common">Indian wild rice</name>
    <name type="synonym">Oryza sativa f. spontanea</name>
    <dbReference type="NCBI Taxonomy" id="4536"/>
    <lineage>
        <taxon>Eukaryota</taxon>
        <taxon>Viridiplantae</taxon>
        <taxon>Streptophyta</taxon>
        <taxon>Embryophyta</taxon>
        <taxon>Tracheophyta</taxon>
        <taxon>Spermatophyta</taxon>
        <taxon>Magnoliopsida</taxon>
        <taxon>Liliopsida</taxon>
        <taxon>Poales</taxon>
        <taxon>Poaceae</taxon>
        <taxon>BOP clade</taxon>
        <taxon>Oryzoideae</taxon>
        <taxon>Oryzeae</taxon>
        <taxon>Oryzinae</taxon>
        <taxon>Oryza</taxon>
    </lineage>
</organism>
<protein>
    <recommendedName>
        <fullName evidence="1">ATP synthase epsilon chain, chloroplastic</fullName>
    </recommendedName>
    <alternativeName>
        <fullName evidence="1">ATP synthase F1 sector epsilon subunit</fullName>
    </alternativeName>
    <alternativeName>
        <fullName evidence="1">F-ATPase epsilon subunit</fullName>
    </alternativeName>
</protein>
<comment type="function">
    <text evidence="1">Produces ATP from ADP in the presence of a proton gradient across the membrane.</text>
</comment>
<comment type="subunit">
    <text evidence="1">F-type ATPases have 2 components, CF(1) - the catalytic core - and CF(0) - the membrane proton channel. CF(1) has five subunits: alpha(3), beta(3), gamma(1), delta(1), epsilon(1). CF(0) has three main subunits: a, b and c.</text>
</comment>
<comment type="subcellular location">
    <subcellularLocation>
        <location evidence="1">Plastid</location>
        <location evidence="1">Chloroplast thylakoid membrane</location>
        <topology evidence="1">Peripheral membrane protein</topology>
    </subcellularLocation>
</comment>
<comment type="similarity">
    <text evidence="1">Belongs to the ATPase epsilon chain family.</text>
</comment>
<feature type="chain" id="PRO_0000188280" description="ATP synthase epsilon chain, chloroplastic">
    <location>
        <begin position="1"/>
        <end position="137"/>
    </location>
</feature>
<sequence>MKLNLYVLTPKRIIWDCEVKEIILSTNSGQIGVLPNHAPINTAVDMGPLRIRLLNDQWLTAVLWSGFARIVNNEIIILGNDAELGSDIDPEEAQQALEIAEANVSRAEGTKELVEAKVALRRARIRVEAVNWIPPSN</sequence>
<accession>Q6ENG8</accession>
<gene>
    <name evidence="1" type="primary">atpE</name>
</gene>
<evidence type="ECO:0000255" key="1">
    <source>
        <dbReference type="HAMAP-Rule" id="MF_00530"/>
    </source>
</evidence>
<evidence type="ECO:0000312" key="2">
    <source>
        <dbReference type="Proteomes" id="UP000006591"/>
    </source>
</evidence>
<dbReference type="EMBL" id="AP006728">
    <property type="protein sequence ID" value="BAD26784.1"/>
    <property type="molecule type" value="Genomic_DNA"/>
</dbReference>
<dbReference type="RefSeq" id="YP_052755.1">
    <property type="nucleotide sequence ID" value="NC_005973.1"/>
</dbReference>
<dbReference type="SMR" id="Q6ENG8"/>
<dbReference type="STRING" id="4536.Q6ENG8"/>
<dbReference type="GeneID" id="2885942"/>
<dbReference type="Proteomes" id="UP000006591">
    <property type="component" value="Chloroplast"/>
</dbReference>
<dbReference type="GO" id="GO:0009535">
    <property type="term" value="C:chloroplast thylakoid membrane"/>
    <property type="evidence" value="ECO:0007669"/>
    <property type="project" value="UniProtKB-SubCell"/>
</dbReference>
<dbReference type="GO" id="GO:0009536">
    <property type="term" value="C:plastid"/>
    <property type="evidence" value="ECO:0000305"/>
    <property type="project" value="Gramene"/>
</dbReference>
<dbReference type="GO" id="GO:0045259">
    <property type="term" value="C:proton-transporting ATP synthase complex"/>
    <property type="evidence" value="ECO:0007669"/>
    <property type="project" value="UniProtKB-KW"/>
</dbReference>
<dbReference type="GO" id="GO:0005524">
    <property type="term" value="F:ATP binding"/>
    <property type="evidence" value="ECO:0007669"/>
    <property type="project" value="UniProtKB-UniRule"/>
</dbReference>
<dbReference type="GO" id="GO:0046933">
    <property type="term" value="F:proton-transporting ATP synthase activity, rotational mechanism"/>
    <property type="evidence" value="ECO:0007669"/>
    <property type="project" value="UniProtKB-UniRule"/>
</dbReference>
<dbReference type="CDD" id="cd12152">
    <property type="entry name" value="F1-ATPase_delta"/>
    <property type="match status" value="1"/>
</dbReference>
<dbReference type="FunFam" id="2.60.15.10:FF:000002">
    <property type="entry name" value="ATP synthase epsilon chain, chloroplastic"/>
    <property type="match status" value="1"/>
</dbReference>
<dbReference type="Gene3D" id="6.10.140.480">
    <property type="match status" value="1"/>
</dbReference>
<dbReference type="Gene3D" id="2.60.15.10">
    <property type="entry name" value="F0F1 ATP synthase delta/epsilon subunit, N-terminal"/>
    <property type="match status" value="1"/>
</dbReference>
<dbReference type="HAMAP" id="MF_00530">
    <property type="entry name" value="ATP_synth_epsil_bac"/>
    <property type="match status" value="1"/>
</dbReference>
<dbReference type="InterPro" id="IPR001469">
    <property type="entry name" value="ATP_synth_F1_dsu/esu"/>
</dbReference>
<dbReference type="InterPro" id="IPR020546">
    <property type="entry name" value="ATP_synth_F1_dsu/esu_N"/>
</dbReference>
<dbReference type="InterPro" id="IPR020547">
    <property type="entry name" value="ATP_synth_F1_esu_C"/>
</dbReference>
<dbReference type="InterPro" id="IPR036771">
    <property type="entry name" value="ATPsynth_dsu/esu_N"/>
</dbReference>
<dbReference type="NCBIfam" id="TIGR01216">
    <property type="entry name" value="ATP_synt_epsi"/>
    <property type="match status" value="1"/>
</dbReference>
<dbReference type="PANTHER" id="PTHR13822">
    <property type="entry name" value="ATP SYNTHASE DELTA/EPSILON CHAIN"/>
    <property type="match status" value="1"/>
</dbReference>
<dbReference type="PANTHER" id="PTHR13822:SF10">
    <property type="entry name" value="ATP SYNTHASE EPSILON CHAIN, CHLOROPLASTIC"/>
    <property type="match status" value="1"/>
</dbReference>
<dbReference type="Pfam" id="PF00401">
    <property type="entry name" value="ATP-synt_DE"/>
    <property type="match status" value="1"/>
</dbReference>
<dbReference type="Pfam" id="PF02823">
    <property type="entry name" value="ATP-synt_DE_N"/>
    <property type="match status" value="1"/>
</dbReference>
<dbReference type="SUPFAM" id="SSF51344">
    <property type="entry name" value="Epsilon subunit of F1F0-ATP synthase N-terminal domain"/>
    <property type="match status" value="1"/>
</dbReference>
<proteinExistence type="inferred from homology"/>
<geneLocation type="chloroplast"/>
<name>ATPE_ORYNI</name>
<reference key="1">
    <citation type="journal article" date="2004" name="Gene">
        <title>The complete nucleotide sequence of wild rice (Oryza nivara) chloroplast genome: first genome wide comparative sequence analysis of wild and cultivated rice.</title>
        <authorList>
            <person name="Masood M.S."/>
            <person name="Nishikawa T."/>
            <person name="Fukuoka S."/>
            <person name="Njenga P.K."/>
            <person name="Tsudzuki T."/>
            <person name="Kadowaki K."/>
        </authorList>
    </citation>
    <scope>NUCLEOTIDE SEQUENCE [LARGE SCALE GENOMIC DNA]</scope>
    <source>
        <strain evidence="2">cv. SL10</strain>
    </source>
</reference>